<organism>
    <name type="scientific">Staphylococcus aureus (strain NCTC 8325 / PS 47)</name>
    <dbReference type="NCBI Taxonomy" id="93061"/>
    <lineage>
        <taxon>Bacteria</taxon>
        <taxon>Bacillati</taxon>
        <taxon>Bacillota</taxon>
        <taxon>Bacilli</taxon>
        <taxon>Bacillales</taxon>
        <taxon>Staphylococcaceae</taxon>
        <taxon>Staphylococcus</taxon>
    </lineage>
</organism>
<protein>
    <recommendedName>
        <fullName>Sensor protein SrrB</fullName>
        <ecNumber>2.7.13.3</ecNumber>
    </recommendedName>
    <alternativeName>
        <fullName>Staphylococcal respiratory response protein B</fullName>
    </alternativeName>
</protein>
<reference key="1">
    <citation type="submission" date="2002-12" db="EMBL/GenBank/DDBJ databases">
        <title>Role of oxygen sensor srrAB in Staphylococcus aureus biofilm formation.</title>
        <authorList>
            <person name="Cramton S.E."/>
            <person name="Doering G."/>
        </authorList>
    </citation>
    <scope>NUCLEOTIDE SEQUENCE [GENOMIC DNA]</scope>
</reference>
<reference key="2">
    <citation type="book" date="2006" name="Gram positive pathogens, 2nd edition">
        <title>The Staphylococcus aureus NCTC 8325 genome.</title>
        <editorList>
            <person name="Fischetti V."/>
            <person name="Novick R."/>
            <person name="Ferretti J."/>
            <person name="Portnoy D."/>
            <person name="Rood J."/>
        </editorList>
        <authorList>
            <person name="Gillaspy A.F."/>
            <person name="Worrell V."/>
            <person name="Orvis J."/>
            <person name="Roe B.A."/>
            <person name="Dyer D.W."/>
            <person name="Iandolo J.J."/>
        </authorList>
    </citation>
    <scope>NUCLEOTIDE SEQUENCE [LARGE SCALE GENOMIC DNA]</scope>
    <source>
        <strain>NCTC 8325 / PS 47</strain>
    </source>
</reference>
<dbReference type="EC" id="2.7.13.3"/>
<dbReference type="EMBL" id="AY197750">
    <property type="protein sequence ID" value="AAP35032.1"/>
    <property type="molecule type" value="Genomic_DNA"/>
</dbReference>
<dbReference type="EMBL" id="CP000253">
    <property type="protein sequence ID" value="ABD30664.1"/>
    <property type="molecule type" value="Genomic_DNA"/>
</dbReference>
<dbReference type="RefSeq" id="WP_000987769.1">
    <property type="nucleotide sequence ID" value="NZ_LS483365.1"/>
</dbReference>
<dbReference type="RefSeq" id="YP_500100.1">
    <property type="nucleotide sequence ID" value="NC_007795.1"/>
</dbReference>
<dbReference type="SMR" id="Q2FY80"/>
<dbReference type="STRING" id="93061.SAOUHSC_01585"/>
<dbReference type="PaxDb" id="1280-SAXN108_1514"/>
<dbReference type="GeneID" id="3920001"/>
<dbReference type="KEGG" id="sao:SAOUHSC_01585"/>
<dbReference type="PATRIC" id="fig|93061.5.peg.1442"/>
<dbReference type="eggNOG" id="COG5002">
    <property type="taxonomic scope" value="Bacteria"/>
</dbReference>
<dbReference type="HOGENOM" id="CLU_000445_89_2_9"/>
<dbReference type="OrthoDB" id="9813151at2"/>
<dbReference type="PRO" id="PR:Q2FY80"/>
<dbReference type="Proteomes" id="UP000008816">
    <property type="component" value="Chromosome"/>
</dbReference>
<dbReference type="GO" id="GO:0005886">
    <property type="term" value="C:plasma membrane"/>
    <property type="evidence" value="ECO:0007669"/>
    <property type="project" value="UniProtKB-SubCell"/>
</dbReference>
<dbReference type="GO" id="GO:0005524">
    <property type="term" value="F:ATP binding"/>
    <property type="evidence" value="ECO:0007669"/>
    <property type="project" value="UniProtKB-KW"/>
</dbReference>
<dbReference type="GO" id="GO:0000156">
    <property type="term" value="F:phosphorelay response regulator activity"/>
    <property type="evidence" value="ECO:0000318"/>
    <property type="project" value="GO_Central"/>
</dbReference>
<dbReference type="GO" id="GO:0000155">
    <property type="term" value="F:phosphorelay sensor kinase activity"/>
    <property type="evidence" value="ECO:0007669"/>
    <property type="project" value="InterPro"/>
</dbReference>
<dbReference type="GO" id="GO:0030295">
    <property type="term" value="F:protein kinase activator activity"/>
    <property type="evidence" value="ECO:0000318"/>
    <property type="project" value="GO_Central"/>
</dbReference>
<dbReference type="GO" id="GO:0007234">
    <property type="term" value="P:osmosensory signaling via phosphorelay pathway"/>
    <property type="evidence" value="ECO:0000318"/>
    <property type="project" value="GO_Central"/>
</dbReference>
<dbReference type="CDD" id="cd06225">
    <property type="entry name" value="HAMP"/>
    <property type="match status" value="1"/>
</dbReference>
<dbReference type="CDD" id="cd00075">
    <property type="entry name" value="HATPase"/>
    <property type="match status" value="1"/>
</dbReference>
<dbReference type="CDD" id="cd00082">
    <property type="entry name" value="HisKA"/>
    <property type="match status" value="1"/>
</dbReference>
<dbReference type="FunFam" id="3.30.565.10:FF:000006">
    <property type="entry name" value="Sensor histidine kinase WalK"/>
    <property type="match status" value="1"/>
</dbReference>
<dbReference type="FunFam" id="1.10.287.130:FF:000001">
    <property type="entry name" value="Two-component sensor histidine kinase"/>
    <property type="match status" value="1"/>
</dbReference>
<dbReference type="Gene3D" id="1.10.287.130">
    <property type="match status" value="1"/>
</dbReference>
<dbReference type="Gene3D" id="6.10.340.10">
    <property type="match status" value="1"/>
</dbReference>
<dbReference type="Gene3D" id="3.30.565.10">
    <property type="entry name" value="Histidine kinase-like ATPase, C-terminal domain"/>
    <property type="match status" value="1"/>
</dbReference>
<dbReference type="InterPro" id="IPR003660">
    <property type="entry name" value="HAMP_dom"/>
</dbReference>
<dbReference type="InterPro" id="IPR036890">
    <property type="entry name" value="HATPase_C_sf"/>
</dbReference>
<dbReference type="InterPro" id="IPR005467">
    <property type="entry name" value="His_kinase_dom"/>
</dbReference>
<dbReference type="InterPro" id="IPR003661">
    <property type="entry name" value="HisK_dim/P_dom"/>
</dbReference>
<dbReference type="InterPro" id="IPR036097">
    <property type="entry name" value="HisK_dim/P_sf"/>
</dbReference>
<dbReference type="InterPro" id="IPR041328">
    <property type="entry name" value="HisK_sensor"/>
</dbReference>
<dbReference type="InterPro" id="IPR052545">
    <property type="entry name" value="Light-responsive_reg"/>
</dbReference>
<dbReference type="InterPro" id="IPR004358">
    <property type="entry name" value="Sig_transdc_His_kin-like_C"/>
</dbReference>
<dbReference type="PANTHER" id="PTHR42878:SF3">
    <property type="entry name" value="HISTIDINE PROTEIN KINASE SAES"/>
    <property type="match status" value="1"/>
</dbReference>
<dbReference type="PANTHER" id="PTHR42878">
    <property type="entry name" value="TWO-COMPONENT HISTIDINE KINASE"/>
    <property type="match status" value="1"/>
</dbReference>
<dbReference type="Pfam" id="PF00672">
    <property type="entry name" value="HAMP"/>
    <property type="match status" value="1"/>
</dbReference>
<dbReference type="Pfam" id="PF02518">
    <property type="entry name" value="HATPase_c"/>
    <property type="match status" value="1"/>
</dbReference>
<dbReference type="Pfam" id="PF18698">
    <property type="entry name" value="HisK_sensor"/>
    <property type="match status" value="1"/>
</dbReference>
<dbReference type="Pfam" id="PF00512">
    <property type="entry name" value="HisKA"/>
    <property type="match status" value="1"/>
</dbReference>
<dbReference type="PRINTS" id="PR00344">
    <property type="entry name" value="BCTRLSENSOR"/>
</dbReference>
<dbReference type="SMART" id="SM00304">
    <property type="entry name" value="HAMP"/>
    <property type="match status" value="1"/>
</dbReference>
<dbReference type="SMART" id="SM00387">
    <property type="entry name" value="HATPase_c"/>
    <property type="match status" value="1"/>
</dbReference>
<dbReference type="SMART" id="SM00388">
    <property type="entry name" value="HisKA"/>
    <property type="match status" value="1"/>
</dbReference>
<dbReference type="SUPFAM" id="SSF55874">
    <property type="entry name" value="ATPase domain of HSP90 chaperone/DNA topoisomerase II/histidine kinase"/>
    <property type="match status" value="1"/>
</dbReference>
<dbReference type="SUPFAM" id="SSF158472">
    <property type="entry name" value="HAMP domain-like"/>
    <property type="match status" value="1"/>
</dbReference>
<dbReference type="SUPFAM" id="SSF47384">
    <property type="entry name" value="Homodimeric domain of signal transducing histidine kinase"/>
    <property type="match status" value="1"/>
</dbReference>
<dbReference type="PROSITE" id="PS50885">
    <property type="entry name" value="HAMP"/>
    <property type="match status" value="1"/>
</dbReference>
<dbReference type="PROSITE" id="PS50109">
    <property type="entry name" value="HIS_KIN"/>
    <property type="match status" value="1"/>
</dbReference>
<evidence type="ECO:0000250" key="1"/>
<evidence type="ECO:0000250" key="2">
    <source>
        <dbReference type="UniProtKB" id="Q5HFT1"/>
    </source>
</evidence>
<evidence type="ECO:0000255" key="3"/>
<evidence type="ECO:0000255" key="4">
    <source>
        <dbReference type="PROSITE-ProRule" id="PRU00102"/>
    </source>
</evidence>
<evidence type="ECO:0000255" key="5">
    <source>
        <dbReference type="PROSITE-ProRule" id="PRU00107"/>
    </source>
</evidence>
<evidence type="ECO:0000305" key="6"/>
<sequence>MMSRLNSVVIKLWLTIILIVTTVLILLSIALITFMQYYFTQETENAIREDARRISSLVEQSHNKEEAIKYSQTLIENPGGLMIINNKHRQSTASLSNIKKQMLNEVVNNDHFDDVFDKGKSVTRNVTIKEKGSSQTYILLGYPTKAQKNSHSKYSGVFIYKDLKSIEDTNNAITIITIITAVIFLTITTVFAFFLSSRITKPLRRLRDQATRVSEGDYSYKPSVTTKDEIGQLSQAFNQMSTEIEEHVDALSTSKNIRDSLINSMVEGVLGINESRQIILSNKMANDIMDNIDEDAKAFLLRQIEDTFKSKQTEMRDLEMNARFFVVTTSYIDKIEQGGKSGVVVTVRDMTNEHNLDQMKKDFIANVSHELRTPISLLQGYTESIVDGIVTEPDEIKESLAIVLDESKRLNRLVNELLNVARMDAEGLSVNKEVQPIAALLDKMKIKYRQQADDLGLNMTFNYCKKRVWSYDMDRMDQVLTNLIDNASRYTKPGDEIAITCDENESEDILYIKDTGTGIAPEHLQQVFDRFYKVDAARTRGKQGTGLGLFICKMIIEEHGGSIDVKSELGKGTTFIIKLPKPE</sequence>
<name>SRRB_STAA8</name>
<comment type="function">
    <text evidence="2">Member of the two-component regulatory system SrrA/SrrB, which is involved in the global regulation of staphylococcal virulence factors in response to environmental oxygen levels as well as biofilm formation. Also plays an essential role in host-derived nitric oxide resistance by regulating hmp/flavohemoglobin, an enzyme that detoxifies nitric oxide by converting it to nitrate. Functions as a sensor protein kinase which is autophosphorylated at a histidine residue and transfers its phosphate group to SrrA. In turn, SrrA binds to the upstream promoter regions of the target genes to positively and negatively regulate their expression.</text>
</comment>
<comment type="catalytic activity">
    <reaction>
        <text>ATP + protein L-histidine = ADP + protein N-phospho-L-histidine.</text>
        <dbReference type="EC" id="2.7.13.3"/>
    </reaction>
</comment>
<comment type="subcellular location">
    <subcellularLocation>
        <location evidence="1">Cell membrane</location>
        <topology evidence="1">Multi-pass membrane protein</topology>
    </subcellularLocation>
</comment>
<gene>
    <name type="primary">srrB</name>
    <name type="ordered locus">SAOUHSC_01585</name>
</gene>
<proteinExistence type="inferred from homology"/>
<accession>Q2FY80</accession>
<feature type="chain" id="PRO_0000290072" description="Sensor protein SrrB">
    <location>
        <begin position="1"/>
        <end position="583"/>
    </location>
</feature>
<feature type="topological domain" description="Cytoplasmic" evidence="3">
    <location>
        <begin position="1"/>
        <end position="11"/>
    </location>
</feature>
<feature type="transmembrane region" description="Helical" evidence="3">
    <location>
        <begin position="12"/>
        <end position="32"/>
    </location>
</feature>
<feature type="topological domain" description="Extracellular" evidence="3">
    <location>
        <begin position="33"/>
        <end position="174"/>
    </location>
</feature>
<feature type="transmembrane region" description="Helical" evidence="3">
    <location>
        <begin position="175"/>
        <end position="195"/>
    </location>
</feature>
<feature type="topological domain" description="Cytoplasmic" evidence="3">
    <location>
        <begin position="196"/>
        <end position="583"/>
    </location>
</feature>
<feature type="domain" description="HAMP" evidence="4">
    <location>
        <begin position="197"/>
        <end position="249"/>
    </location>
</feature>
<feature type="domain" description="Histidine kinase" evidence="5">
    <location>
        <begin position="366"/>
        <end position="583"/>
    </location>
</feature>
<feature type="modified residue" description="Phosphohistidine; by autocatalysis" evidence="5">
    <location>
        <position position="369"/>
    </location>
</feature>
<feature type="sequence conflict" description="In Ref. 1; AAP35032." evidence="6" ref="1">
    <original>I</original>
    <variation>V</variation>
    <location>
        <position position="332"/>
    </location>
</feature>
<keyword id="KW-0067">ATP-binding</keyword>
<keyword id="KW-1003">Cell membrane</keyword>
<keyword id="KW-0418">Kinase</keyword>
<keyword id="KW-0472">Membrane</keyword>
<keyword id="KW-0547">Nucleotide-binding</keyword>
<keyword id="KW-0597">Phosphoprotein</keyword>
<keyword id="KW-1185">Reference proteome</keyword>
<keyword id="KW-0808">Transferase</keyword>
<keyword id="KW-0812">Transmembrane</keyword>
<keyword id="KW-1133">Transmembrane helix</keyword>
<keyword id="KW-0902">Two-component regulatory system</keyword>